<gene>
    <name evidence="1" type="primary">rpsG</name>
    <name type="ordered locus">Ssed_4321</name>
</gene>
<evidence type="ECO:0000255" key="1">
    <source>
        <dbReference type="HAMAP-Rule" id="MF_00480"/>
    </source>
</evidence>
<evidence type="ECO:0000305" key="2"/>
<proteinExistence type="inferred from homology"/>
<protein>
    <recommendedName>
        <fullName evidence="1">Small ribosomal subunit protein uS7</fullName>
    </recommendedName>
    <alternativeName>
        <fullName evidence="2">30S ribosomal protein S7</fullName>
    </alternativeName>
</protein>
<reference key="1">
    <citation type="submission" date="2007-08" db="EMBL/GenBank/DDBJ databases">
        <title>Complete sequence of Shewanella sediminis HAW-EB3.</title>
        <authorList>
            <consortium name="US DOE Joint Genome Institute"/>
            <person name="Copeland A."/>
            <person name="Lucas S."/>
            <person name="Lapidus A."/>
            <person name="Barry K."/>
            <person name="Glavina del Rio T."/>
            <person name="Dalin E."/>
            <person name="Tice H."/>
            <person name="Pitluck S."/>
            <person name="Chertkov O."/>
            <person name="Brettin T."/>
            <person name="Bruce D."/>
            <person name="Detter J.C."/>
            <person name="Han C."/>
            <person name="Schmutz J."/>
            <person name="Larimer F."/>
            <person name="Land M."/>
            <person name="Hauser L."/>
            <person name="Kyrpides N."/>
            <person name="Kim E."/>
            <person name="Zhao J.-S."/>
            <person name="Richardson P."/>
        </authorList>
    </citation>
    <scope>NUCLEOTIDE SEQUENCE [LARGE SCALE GENOMIC DNA]</scope>
    <source>
        <strain>HAW-EB3</strain>
    </source>
</reference>
<comment type="function">
    <text evidence="1">One of the primary rRNA binding proteins, it binds directly to 16S rRNA where it nucleates assembly of the head domain of the 30S subunit. Is located at the subunit interface close to the decoding center, probably blocks exit of the E-site tRNA.</text>
</comment>
<comment type="subunit">
    <text evidence="1">Part of the 30S ribosomal subunit. Contacts proteins S9 and S11.</text>
</comment>
<comment type="similarity">
    <text evidence="1">Belongs to the universal ribosomal protein uS7 family.</text>
</comment>
<accession>A8G1F2</accession>
<name>RS7_SHESH</name>
<keyword id="KW-1185">Reference proteome</keyword>
<keyword id="KW-0687">Ribonucleoprotein</keyword>
<keyword id="KW-0689">Ribosomal protein</keyword>
<keyword id="KW-0694">RNA-binding</keyword>
<keyword id="KW-0699">rRNA-binding</keyword>
<keyword id="KW-0820">tRNA-binding</keyword>
<dbReference type="EMBL" id="CP000821">
    <property type="protein sequence ID" value="ABV38925.1"/>
    <property type="molecule type" value="Genomic_DNA"/>
</dbReference>
<dbReference type="RefSeq" id="WP_012144652.1">
    <property type="nucleotide sequence ID" value="NC_009831.1"/>
</dbReference>
<dbReference type="SMR" id="A8G1F2"/>
<dbReference type="STRING" id="425104.Ssed_4321"/>
<dbReference type="KEGG" id="sse:Ssed_4321"/>
<dbReference type="eggNOG" id="COG0049">
    <property type="taxonomic scope" value="Bacteria"/>
</dbReference>
<dbReference type="HOGENOM" id="CLU_072226_1_1_6"/>
<dbReference type="OrthoDB" id="9807653at2"/>
<dbReference type="Proteomes" id="UP000002015">
    <property type="component" value="Chromosome"/>
</dbReference>
<dbReference type="GO" id="GO:0015935">
    <property type="term" value="C:small ribosomal subunit"/>
    <property type="evidence" value="ECO:0007669"/>
    <property type="project" value="InterPro"/>
</dbReference>
<dbReference type="GO" id="GO:0019843">
    <property type="term" value="F:rRNA binding"/>
    <property type="evidence" value="ECO:0007669"/>
    <property type="project" value="UniProtKB-UniRule"/>
</dbReference>
<dbReference type="GO" id="GO:0003735">
    <property type="term" value="F:structural constituent of ribosome"/>
    <property type="evidence" value="ECO:0007669"/>
    <property type="project" value="InterPro"/>
</dbReference>
<dbReference type="GO" id="GO:0000049">
    <property type="term" value="F:tRNA binding"/>
    <property type="evidence" value="ECO:0007669"/>
    <property type="project" value="UniProtKB-UniRule"/>
</dbReference>
<dbReference type="GO" id="GO:0006412">
    <property type="term" value="P:translation"/>
    <property type="evidence" value="ECO:0007669"/>
    <property type="project" value="UniProtKB-UniRule"/>
</dbReference>
<dbReference type="CDD" id="cd14869">
    <property type="entry name" value="uS7_Bacteria"/>
    <property type="match status" value="1"/>
</dbReference>
<dbReference type="FunFam" id="1.10.455.10:FF:000001">
    <property type="entry name" value="30S ribosomal protein S7"/>
    <property type="match status" value="1"/>
</dbReference>
<dbReference type="Gene3D" id="1.10.455.10">
    <property type="entry name" value="Ribosomal protein S7 domain"/>
    <property type="match status" value="1"/>
</dbReference>
<dbReference type="HAMAP" id="MF_00480_B">
    <property type="entry name" value="Ribosomal_uS7_B"/>
    <property type="match status" value="1"/>
</dbReference>
<dbReference type="InterPro" id="IPR000235">
    <property type="entry name" value="Ribosomal_uS7"/>
</dbReference>
<dbReference type="InterPro" id="IPR005717">
    <property type="entry name" value="Ribosomal_uS7_bac/org-type"/>
</dbReference>
<dbReference type="InterPro" id="IPR020606">
    <property type="entry name" value="Ribosomal_uS7_CS"/>
</dbReference>
<dbReference type="InterPro" id="IPR023798">
    <property type="entry name" value="Ribosomal_uS7_dom"/>
</dbReference>
<dbReference type="InterPro" id="IPR036823">
    <property type="entry name" value="Ribosomal_uS7_dom_sf"/>
</dbReference>
<dbReference type="NCBIfam" id="TIGR01029">
    <property type="entry name" value="rpsG_bact"/>
    <property type="match status" value="1"/>
</dbReference>
<dbReference type="PANTHER" id="PTHR11205">
    <property type="entry name" value="RIBOSOMAL PROTEIN S7"/>
    <property type="match status" value="1"/>
</dbReference>
<dbReference type="Pfam" id="PF00177">
    <property type="entry name" value="Ribosomal_S7"/>
    <property type="match status" value="1"/>
</dbReference>
<dbReference type="PIRSF" id="PIRSF002122">
    <property type="entry name" value="RPS7p_RPS7a_RPS5e_RPS7o"/>
    <property type="match status" value="1"/>
</dbReference>
<dbReference type="SUPFAM" id="SSF47973">
    <property type="entry name" value="Ribosomal protein S7"/>
    <property type="match status" value="1"/>
</dbReference>
<dbReference type="PROSITE" id="PS00052">
    <property type="entry name" value="RIBOSOMAL_S7"/>
    <property type="match status" value="1"/>
</dbReference>
<organism>
    <name type="scientific">Shewanella sediminis (strain HAW-EB3)</name>
    <dbReference type="NCBI Taxonomy" id="425104"/>
    <lineage>
        <taxon>Bacteria</taxon>
        <taxon>Pseudomonadati</taxon>
        <taxon>Pseudomonadota</taxon>
        <taxon>Gammaproteobacteria</taxon>
        <taxon>Alteromonadales</taxon>
        <taxon>Shewanellaceae</taxon>
        <taxon>Shewanella</taxon>
    </lineage>
</organism>
<feature type="chain" id="PRO_1000081305" description="Small ribosomal subunit protein uS7">
    <location>
        <begin position="1"/>
        <end position="156"/>
    </location>
</feature>
<sequence>MPRRRVVGQRKILPDPKFNSELLAKFINVIMQDGKKSTAEKIIYKALDTASEKKSEDHLVILEAALENVRPSVEVKSRRVGGSTYQVPCEVRPVRRNALGMRWLVEAARKRGEKSMALRLAGELLDASDNKGTAVKKREDVHRMAEANKAFAHYRW</sequence>